<keyword id="KW-0002">3D-structure</keyword>
<keyword id="KW-0119">Carbohydrate metabolism</keyword>
<keyword id="KW-0136">Cellulose degradation</keyword>
<keyword id="KW-0325">Glycoprotein</keyword>
<keyword id="KW-0326">Glycosidase</keyword>
<keyword id="KW-0378">Hydrolase</keyword>
<keyword id="KW-0624">Polysaccharide degradation</keyword>
<keyword id="KW-1185">Reference proteome</keyword>
<keyword id="KW-0677">Repeat</keyword>
<keyword id="KW-0732">Signal</keyword>
<keyword id="KW-0749">Sporulation</keyword>
<organism>
    <name type="scientific">Dictyostelium discoideum</name>
    <name type="common">Social amoeba</name>
    <dbReference type="NCBI Taxonomy" id="44689"/>
    <lineage>
        <taxon>Eukaryota</taxon>
        <taxon>Amoebozoa</taxon>
        <taxon>Evosea</taxon>
        <taxon>Eumycetozoa</taxon>
        <taxon>Dictyostelia</taxon>
        <taxon>Dictyosteliales</taxon>
        <taxon>Dictyosteliaceae</taxon>
        <taxon>Dictyostelium</taxon>
    </lineage>
</organism>
<name>GUN6_DICDI</name>
<evidence type="ECO:0000255" key="1"/>
<evidence type="ECO:0000255" key="2">
    <source>
        <dbReference type="PROSITE-ProRule" id="PRU10059"/>
    </source>
</evidence>
<evidence type="ECO:0000255" key="3">
    <source>
        <dbReference type="PROSITE-ProRule" id="PRU10060"/>
    </source>
</evidence>
<evidence type="ECO:0000255" key="4">
    <source>
        <dbReference type="PROSITE-ProRule" id="PRU10140"/>
    </source>
</evidence>
<evidence type="ECO:0000256" key="5">
    <source>
        <dbReference type="SAM" id="MobiDB-lite"/>
    </source>
</evidence>
<evidence type="ECO:0000269" key="6">
    <source>
    </source>
</evidence>
<evidence type="ECO:0000305" key="7"/>
<evidence type="ECO:0007829" key="8">
    <source>
        <dbReference type="PDB" id="7T7Z"/>
    </source>
</evidence>
<reference key="1">
    <citation type="journal article" date="1990" name="Biochemistry">
        <title>A shared internal threonine-glutamic acid-threonine-proline repeat defines a family of Dictyostelium discoideum spore germination specific proteins.</title>
        <authorList>
            <person name="Giorda R."/>
            <person name="Ohmachi T."/>
            <person name="Shaw D.R."/>
            <person name="Ennis H.L."/>
        </authorList>
    </citation>
    <scope>NUCLEOTIDE SEQUENCE [GENOMIC DNA]</scope>
</reference>
<reference key="2">
    <citation type="journal article" date="2002" name="Nature">
        <title>Sequence and analysis of chromosome 2 of Dictyostelium discoideum.</title>
        <authorList>
            <person name="Gloeckner G."/>
            <person name="Eichinger L."/>
            <person name="Szafranski K."/>
            <person name="Pachebat J.A."/>
            <person name="Bankier A.T."/>
            <person name="Dear P.H."/>
            <person name="Lehmann R."/>
            <person name="Baumgart C."/>
            <person name="Parra G."/>
            <person name="Abril J.F."/>
            <person name="Guigo R."/>
            <person name="Kumpf K."/>
            <person name="Tunggal B."/>
            <person name="Cox E.C."/>
            <person name="Quail M.A."/>
            <person name="Platzer M."/>
            <person name="Rosenthal A."/>
            <person name="Noegel A.A."/>
        </authorList>
    </citation>
    <scope>NUCLEOTIDE SEQUENCE [LARGE SCALE GENOMIC DNA]</scope>
    <source>
        <strain>AX4</strain>
    </source>
</reference>
<reference key="3">
    <citation type="journal article" date="2005" name="Nature">
        <title>The genome of the social amoeba Dictyostelium discoideum.</title>
        <authorList>
            <person name="Eichinger L."/>
            <person name="Pachebat J.A."/>
            <person name="Gloeckner G."/>
            <person name="Rajandream M.A."/>
            <person name="Sucgang R."/>
            <person name="Berriman M."/>
            <person name="Song J."/>
            <person name="Olsen R."/>
            <person name="Szafranski K."/>
            <person name="Xu Q."/>
            <person name="Tunggal B."/>
            <person name="Kummerfeld S."/>
            <person name="Madera M."/>
            <person name="Konfortov B.A."/>
            <person name="Rivero F."/>
            <person name="Bankier A.T."/>
            <person name="Lehmann R."/>
            <person name="Hamlin N."/>
            <person name="Davies R."/>
            <person name="Gaudet P."/>
            <person name="Fey P."/>
            <person name="Pilcher K."/>
            <person name="Chen G."/>
            <person name="Saunders D."/>
            <person name="Sodergren E.J."/>
            <person name="Davis P."/>
            <person name="Kerhornou A."/>
            <person name="Nie X."/>
            <person name="Hall N."/>
            <person name="Anjard C."/>
            <person name="Hemphill L."/>
            <person name="Bason N."/>
            <person name="Farbrother P."/>
            <person name="Desany B."/>
            <person name="Just E."/>
            <person name="Morio T."/>
            <person name="Rost R."/>
            <person name="Churcher C.M."/>
            <person name="Cooper J."/>
            <person name="Haydock S."/>
            <person name="van Driessche N."/>
            <person name="Cronin A."/>
            <person name="Goodhead I."/>
            <person name="Muzny D.M."/>
            <person name="Mourier T."/>
            <person name="Pain A."/>
            <person name="Lu M."/>
            <person name="Harper D."/>
            <person name="Lindsay R."/>
            <person name="Hauser H."/>
            <person name="James K.D."/>
            <person name="Quiles M."/>
            <person name="Madan Babu M."/>
            <person name="Saito T."/>
            <person name="Buchrieser C."/>
            <person name="Wardroper A."/>
            <person name="Felder M."/>
            <person name="Thangavelu M."/>
            <person name="Johnson D."/>
            <person name="Knights A."/>
            <person name="Loulseged H."/>
            <person name="Mungall K.L."/>
            <person name="Oliver K."/>
            <person name="Price C."/>
            <person name="Quail M.A."/>
            <person name="Urushihara H."/>
            <person name="Hernandez J."/>
            <person name="Rabbinowitsch E."/>
            <person name="Steffen D."/>
            <person name="Sanders M."/>
            <person name="Ma J."/>
            <person name="Kohara Y."/>
            <person name="Sharp S."/>
            <person name="Simmonds M.N."/>
            <person name="Spiegler S."/>
            <person name="Tivey A."/>
            <person name="Sugano S."/>
            <person name="White B."/>
            <person name="Walker D."/>
            <person name="Woodward J.R."/>
            <person name="Winckler T."/>
            <person name="Tanaka Y."/>
            <person name="Shaulsky G."/>
            <person name="Schleicher M."/>
            <person name="Weinstock G.M."/>
            <person name="Rosenthal A."/>
            <person name="Cox E.C."/>
            <person name="Chisholm R.L."/>
            <person name="Gibbs R.A."/>
            <person name="Loomis W.F."/>
            <person name="Platzer M."/>
            <person name="Kay R.R."/>
            <person name="Williams J.G."/>
            <person name="Dear P.H."/>
            <person name="Noegel A.A."/>
            <person name="Barrell B.G."/>
            <person name="Kuspa A."/>
        </authorList>
    </citation>
    <scope>NUCLEOTIDE SEQUENCE [LARGE SCALE GENOMIC DNA]</scope>
    <source>
        <strain>AX4</strain>
    </source>
</reference>
<reference key="4">
    <citation type="journal article" date="1991" name="J. Biol. Chem.">
        <title>A Dictyostelium discoideum cellulase is a member of a spore germination-specific gene family.</title>
        <authorList>
            <person name="Blume J.E."/>
            <person name="Ennis H.L."/>
        </authorList>
    </citation>
    <scope>FUNCTION</scope>
</reference>
<gene>
    <name type="primary">celA</name>
    <name type="ORF">DDB_G0271134</name>
</gene>
<protein>
    <recommendedName>
        <fullName>Endoglucanase</fullName>
        <ecNumber>3.2.1.4</ecNumber>
    </recommendedName>
    <alternativeName>
        <fullName>Cellulase</fullName>
    </alternativeName>
    <alternativeName>
        <fullName>Endo-1,4-beta-glucanase</fullName>
    </alternativeName>
    <alternativeName>
        <fullName>Spore germination protein 270-6</fullName>
    </alternativeName>
</protein>
<proteinExistence type="evidence at protein level"/>
<accession>P22699</accession>
<accession>Q55BI5</accession>
<sequence>MKILKNCILLIIFGLLSTQLINADTDYCSLLENALMFYKMNRAGRLPDNDIPWRGNSALNDASPNSAKDANGDGNLSGGYFDAGDGVKFGLPMAYSMTMLGWSFIEYESNIAQCGLTSLYLDTIKYGTDWLIAAHTADNEFAGQVGDGNVDHSWWGPPEDMTMARPTYMLTTEAPGTEIAMEAASALAAASIAFKSSNPTYAATCLAHAKTLHNFGYTYRGVYSDSITNAQAFYNSWSGYKDDLVWGSIWLYKATQDSDYLTKAVADYASGGVGGMAQGNSHDWDNKAPGCCLLLSKLVPTTSTYKTDFEGWLNYWLPGGGVTYTPGGLAWIRQWGPARYAATAAFLGSLAGTEKGTDFTQKQVDYLIGNNPNQQSFVVGMGPNYPINPHHRAAHHSTTNDINNPVNNLYLLKGALVGGPGSNDEYTDDRTDYISNEVATDYNAGFVGALASLVNPSSTSVPTTTPTVTETPTETPTETPTETPTETPTETPTETPTETPTETPTETPTETPTETPTETPTETPTETPTETPTETPTETVTPTPTVTPTETPSSGESLSIYKSGLKNDFQDWSWGEHSLTDTTNVESGETNSISFTPKAYGAVFLGCFECIDTDTYNNIEFDINGGSSGAQLLRITVVKNSKSVGSKLITDLNGGTPIEANSWTKIKASFIDDFKVSGKVDGIWIQDIKGDTQSTVYISNIIATA</sequence>
<feature type="signal peptide" evidence="1">
    <location>
        <begin position="1"/>
        <end position="23"/>
    </location>
</feature>
<feature type="chain" id="PRO_0000007953" description="Endoglucanase">
    <location>
        <begin position="24"/>
        <end position="705"/>
    </location>
</feature>
<feature type="region of interest" description="Disordered" evidence="5">
    <location>
        <begin position="455"/>
        <end position="556"/>
    </location>
</feature>
<feature type="region of interest" description="Pro/Thr repeats ('hinge') (Pro/Thr box)">
    <location>
        <begin position="463"/>
        <end position="552"/>
    </location>
</feature>
<feature type="compositionally biased region" description="Low complexity" evidence="5">
    <location>
        <begin position="462"/>
        <end position="552"/>
    </location>
</feature>
<feature type="active site" description="Nucleophile" evidence="4">
    <location>
        <position position="85"/>
    </location>
</feature>
<feature type="active site" evidence="2">
    <location>
        <position position="390"/>
    </location>
</feature>
<feature type="active site" evidence="3">
    <location>
        <position position="428"/>
    </location>
</feature>
<feature type="active site" evidence="3">
    <location>
        <position position="437"/>
    </location>
</feature>
<feature type="glycosylation site" description="N-linked (GlcNAc...) asparagine" evidence="1">
    <location>
        <position position="75"/>
    </location>
</feature>
<feature type="strand" evidence="8">
    <location>
        <begin position="557"/>
        <end position="565"/>
    </location>
</feature>
<feature type="strand" evidence="8">
    <location>
        <begin position="575"/>
        <end position="581"/>
    </location>
</feature>
<feature type="strand" evidence="8">
    <location>
        <begin position="592"/>
        <end position="595"/>
    </location>
</feature>
<feature type="strand" evidence="8">
    <location>
        <begin position="602"/>
        <end position="612"/>
    </location>
</feature>
<feature type="turn" evidence="8">
    <location>
        <begin position="613"/>
        <end position="615"/>
    </location>
</feature>
<feature type="strand" evidence="8">
    <location>
        <begin position="618"/>
        <end position="624"/>
    </location>
</feature>
<feature type="turn" evidence="8">
    <location>
        <begin position="626"/>
        <end position="628"/>
    </location>
</feature>
<feature type="strand" evidence="8">
    <location>
        <begin position="633"/>
        <end position="639"/>
    </location>
</feature>
<feature type="strand" evidence="8">
    <location>
        <begin position="642"/>
        <end position="648"/>
    </location>
</feature>
<feature type="helix" evidence="8">
    <location>
        <begin position="649"/>
        <end position="652"/>
    </location>
</feature>
<feature type="turn" evidence="8">
    <location>
        <begin position="653"/>
        <end position="655"/>
    </location>
</feature>
<feature type="strand" evidence="8">
    <location>
        <begin position="662"/>
        <end position="669"/>
    </location>
</feature>
<feature type="helix" evidence="8">
    <location>
        <begin position="670"/>
        <end position="674"/>
    </location>
</feature>
<feature type="strand" evidence="8">
    <location>
        <begin position="678"/>
        <end position="687"/>
    </location>
</feature>
<feature type="strand" evidence="8">
    <location>
        <begin position="696"/>
        <end position="704"/>
    </location>
</feature>
<dbReference type="EC" id="3.2.1.4"/>
<dbReference type="EMBL" id="M33861">
    <property type="protein sequence ID" value="AAA52077.1"/>
    <property type="molecule type" value="Genomic_DNA"/>
</dbReference>
<dbReference type="EMBL" id="AAFI02000006">
    <property type="protein sequence ID" value="EAL71697.1"/>
    <property type="molecule type" value="Genomic_DNA"/>
</dbReference>
<dbReference type="PIR" id="A35621">
    <property type="entry name" value="A35621"/>
</dbReference>
<dbReference type="RefSeq" id="XP_645627.1">
    <property type="nucleotide sequence ID" value="XM_640535.1"/>
</dbReference>
<dbReference type="PDB" id="7T7Y">
    <property type="method" value="X-ray"/>
    <property type="resolution" value="1.81 A"/>
    <property type="chains" value="A=555-705"/>
</dbReference>
<dbReference type="PDB" id="7T7Z">
    <property type="method" value="X-ray"/>
    <property type="resolution" value="1.46 A"/>
    <property type="chains" value="A=555-705"/>
</dbReference>
<dbReference type="PDBsum" id="7T7Y"/>
<dbReference type="PDBsum" id="7T7Z"/>
<dbReference type="SMR" id="P22699"/>
<dbReference type="FunCoup" id="P22699">
    <property type="interactions" value="33"/>
</dbReference>
<dbReference type="STRING" id="44689.P22699"/>
<dbReference type="CAZy" id="CBM8">
    <property type="family name" value="Carbohydrate-Binding Module Family 8"/>
</dbReference>
<dbReference type="CAZy" id="GH9">
    <property type="family name" value="Glycoside Hydrolase Family 9"/>
</dbReference>
<dbReference type="GlyCosmos" id="P22699">
    <property type="glycosylation" value="1 site, No reported glycans"/>
</dbReference>
<dbReference type="GlyGen" id="P22699">
    <property type="glycosylation" value="3 sites"/>
</dbReference>
<dbReference type="PaxDb" id="44689-DDB0215351"/>
<dbReference type="EnsemblProtists" id="EAL71697">
    <property type="protein sequence ID" value="EAL71697"/>
    <property type="gene ID" value="DDB_G0271134"/>
</dbReference>
<dbReference type="GeneID" id="8617819"/>
<dbReference type="KEGG" id="ddi:DDB_G0271134"/>
<dbReference type="dictyBase" id="DDB_G0271134">
    <property type="gene designation" value="celA"/>
</dbReference>
<dbReference type="VEuPathDB" id="AmoebaDB:DDB_G0271134"/>
<dbReference type="eggNOG" id="ENOG502QRF6">
    <property type="taxonomic scope" value="Eukaryota"/>
</dbReference>
<dbReference type="HOGENOM" id="CLU_008926_4_0_1"/>
<dbReference type="InParanoid" id="P22699"/>
<dbReference type="OMA" id="SKGWIWW"/>
<dbReference type="PhylomeDB" id="P22699"/>
<dbReference type="PRO" id="PR:P22699"/>
<dbReference type="Proteomes" id="UP000002195">
    <property type="component" value="Chromosome 2"/>
</dbReference>
<dbReference type="GO" id="GO:0005576">
    <property type="term" value="C:extracellular region"/>
    <property type="evidence" value="ECO:0000314"/>
    <property type="project" value="dictyBase"/>
</dbReference>
<dbReference type="GO" id="GO:0008810">
    <property type="term" value="F:cellulase activity"/>
    <property type="evidence" value="ECO:0000314"/>
    <property type="project" value="dictyBase"/>
</dbReference>
<dbReference type="GO" id="GO:0030248">
    <property type="term" value="F:cellulose binding"/>
    <property type="evidence" value="ECO:0000314"/>
    <property type="project" value="dictyBase"/>
</dbReference>
<dbReference type="GO" id="GO:0030245">
    <property type="term" value="P:cellulose catabolic process"/>
    <property type="evidence" value="ECO:0007669"/>
    <property type="project" value="UniProtKB-KW"/>
</dbReference>
<dbReference type="GO" id="GO:0009847">
    <property type="term" value="P:spore germination"/>
    <property type="evidence" value="ECO:0000270"/>
    <property type="project" value="dictyBase"/>
</dbReference>
<dbReference type="GO" id="GO:0030435">
    <property type="term" value="P:sporulation resulting in formation of a cellular spore"/>
    <property type="evidence" value="ECO:0007669"/>
    <property type="project" value="UniProtKB-KW"/>
</dbReference>
<dbReference type="FunFam" id="1.50.10.10:FF:000020">
    <property type="entry name" value="Endoglucanase"/>
    <property type="match status" value="1"/>
</dbReference>
<dbReference type="Gene3D" id="1.50.10.10">
    <property type="match status" value="1"/>
</dbReference>
<dbReference type="Gene3D" id="2.60.120.430">
    <property type="entry name" value="Galactose-binding lectin"/>
    <property type="match status" value="1"/>
</dbReference>
<dbReference type="InterPro" id="IPR008928">
    <property type="entry name" value="6-hairpin_glycosidase_sf"/>
</dbReference>
<dbReference type="InterPro" id="IPR012341">
    <property type="entry name" value="6hp_glycosidase-like_sf"/>
</dbReference>
<dbReference type="InterPro" id="IPR001701">
    <property type="entry name" value="Glyco_hydro_9"/>
</dbReference>
<dbReference type="InterPro" id="IPR033126">
    <property type="entry name" value="Glyco_hydro_9_Asp/Glu_AS"/>
</dbReference>
<dbReference type="InterPro" id="IPR018221">
    <property type="entry name" value="Glyco_hydro_9_His_AS"/>
</dbReference>
<dbReference type="PANTHER" id="PTHR22298">
    <property type="entry name" value="ENDO-1,4-BETA-GLUCANASE"/>
    <property type="match status" value="1"/>
</dbReference>
<dbReference type="Pfam" id="PF00759">
    <property type="entry name" value="Glyco_hydro_9"/>
    <property type="match status" value="1"/>
</dbReference>
<dbReference type="SUPFAM" id="SSF48208">
    <property type="entry name" value="Six-hairpin glycosidases"/>
    <property type="match status" value="1"/>
</dbReference>
<dbReference type="PROSITE" id="PS60032">
    <property type="entry name" value="GH9_1"/>
    <property type="match status" value="1"/>
</dbReference>
<dbReference type="PROSITE" id="PS00592">
    <property type="entry name" value="GH9_2"/>
    <property type="match status" value="1"/>
</dbReference>
<dbReference type="PROSITE" id="PS00698">
    <property type="entry name" value="GH9_3"/>
    <property type="match status" value="1"/>
</dbReference>
<comment type="function">
    <text evidence="6">May digest the spore cell wall during germination, to release the enclosed amoeba.</text>
</comment>
<comment type="catalytic activity">
    <reaction>
        <text>Endohydrolysis of (1-&gt;4)-beta-D-glucosidic linkages in cellulose, lichenin and cereal beta-D-glucans.</text>
        <dbReference type="EC" id="3.2.1.4"/>
    </reaction>
</comment>
<comment type="developmental stage">
    <text>Found predominantly during early stages of spore germination.</text>
</comment>
<comment type="similarity">
    <text evidence="4 7">Belongs to the glycosyl hydrolase 9 (cellulase E) family.</text>
</comment>